<reference key="1">
    <citation type="submission" date="1996-08" db="EMBL/GenBank/DDBJ databases">
        <title>DNA sequence and genomic organization of canine adenovirus type 1.</title>
        <authorList>
            <person name="Campbell J.B."/>
            <person name="Zhao Y."/>
        </authorList>
    </citation>
    <scope>NUCLEOTIDE SEQUENCE [LARGE SCALE GENOMIC DNA]</scope>
</reference>
<sequence length="444" mass="49271">MEQDSDLESGRATNQRPPRVRVRGAGVRGRGRVRRRALSEGQRRSPFRLDDLQLPDSLYVTRALQRDHALEMPRGQVDFSLIEAEERRAGPTDEWYFESVKTYRAKPGDDLQTLIKNYAKISLECGAVYEINSKIVVTGACYIIGNCAVLRANLPVGTAMFEVLNVDVIPSIGFMERIVFSNILFDCRSTTAVVCCISERNTLFHNCVFSGPHMLCLDIRAGAEVRGCHFVGAVCALRSKGLYSVRVRNSIFEKCAFGVVSGSKASISHSMFKDCACCIMFGGQGTIAHSHFMATTCTDTPMNLQLCTCEGNGSHVVPLGNIHFASNREAPWPTFNANVLVRVRLYMGRRRGVFHPKQSTFSMCVIAAPRGVVQRIYLFSVYDATCAILQLGEAGDAATERLCTRGMRHNTPSLRAAYVTDTRIDREINSQDTAEFFSSDEDNL</sequence>
<organismHost>
    <name type="scientific">Canis lupus familiaris</name>
    <name type="common">Dog</name>
    <name type="synonym">Canis familiaris</name>
    <dbReference type="NCBI Taxonomy" id="9615"/>
</organismHost>
<feature type="chain" id="PRO_0000221730" description="E1B 55 kDa protein">
    <location>
        <begin position="1"/>
        <end position="444"/>
    </location>
</feature>
<feature type="region of interest" description="Disordered" evidence="3">
    <location>
        <begin position="1"/>
        <end position="42"/>
    </location>
</feature>
<feature type="modified residue" description="Phosphoserine" evidence="1">
    <location>
        <position position="438"/>
    </location>
</feature>
<feature type="modified residue" description="Phosphoserine" evidence="1">
    <location>
        <position position="439"/>
    </location>
</feature>
<accession>Q65943</accession>
<keyword id="KW-0244">Early protein</keyword>
<keyword id="KW-1035">Host cytoplasm</keyword>
<keyword id="KW-1048">Host nucleus</keyword>
<keyword id="KW-0945">Host-virus interaction</keyword>
<keyword id="KW-1119">Modulation of host cell apoptosis by virus</keyword>
<keyword id="KW-0597">Phosphoprotein</keyword>
<protein>
    <recommendedName>
        <fullName>E1B 55 kDa protein</fullName>
        <shortName>E1B-55K</shortName>
    </recommendedName>
    <alternativeName>
        <fullName>E1B protein, large T-antigen</fullName>
    </alternativeName>
    <alternativeName>
        <fullName>E1B-495R</fullName>
    </alternativeName>
</protein>
<proteinExistence type="inferred from homology"/>
<dbReference type="EMBL" id="U55001">
    <property type="protein sequence ID" value="AAB05431.1"/>
    <property type="molecule type" value="Genomic_DNA"/>
</dbReference>
<dbReference type="SMR" id="Q65943"/>
<dbReference type="GO" id="GO:0030430">
    <property type="term" value="C:host cell cytoplasm"/>
    <property type="evidence" value="ECO:0000250"/>
    <property type="project" value="UniProtKB"/>
</dbReference>
<dbReference type="GO" id="GO:0042025">
    <property type="term" value="C:host cell nucleus"/>
    <property type="evidence" value="ECO:0007669"/>
    <property type="project" value="UniProtKB-SubCell"/>
</dbReference>
<dbReference type="GO" id="GO:1990756">
    <property type="term" value="F:ubiquitin-like ligase-substrate adaptor activity"/>
    <property type="evidence" value="ECO:0000250"/>
    <property type="project" value="UniProtKB"/>
</dbReference>
<dbReference type="GO" id="GO:0052150">
    <property type="term" value="P:symbiont-mediated perturbation of host apoptosis"/>
    <property type="evidence" value="ECO:0007669"/>
    <property type="project" value="UniProtKB-KW"/>
</dbReference>
<dbReference type="GO" id="GO:0039648">
    <property type="term" value="P:symbiont-mediated perturbation of host ubiquitin-like protein modification"/>
    <property type="evidence" value="ECO:0000250"/>
    <property type="project" value="UniProtKB"/>
</dbReference>
<dbReference type="InterPro" id="IPR002612">
    <property type="entry name" value="Adeno_E1B_55kDa"/>
</dbReference>
<dbReference type="InterPro" id="IPR011050">
    <property type="entry name" value="Pectin_lyase_fold/virulence"/>
</dbReference>
<dbReference type="Pfam" id="PF01696">
    <property type="entry name" value="Adeno_E1B_55K"/>
    <property type="match status" value="1"/>
</dbReference>
<dbReference type="SUPFAM" id="SSF51126">
    <property type="entry name" value="Pectin lyase-like"/>
    <property type="match status" value="1"/>
</dbReference>
<organism>
    <name type="scientific">Canine adenovirus serotype 1 (strain CLL)</name>
    <name type="common">CAdV-1</name>
    <name type="synonym">Canine adenovirus 1 (strain CLL)</name>
    <dbReference type="NCBI Taxonomy" id="69150"/>
    <lineage>
        <taxon>Viruses</taxon>
        <taxon>Varidnaviria</taxon>
        <taxon>Bamfordvirae</taxon>
        <taxon>Preplasmiviricota</taxon>
        <taxon>Tectiliviricetes</taxon>
        <taxon>Rowavirales</taxon>
        <taxon>Adenoviridae</taxon>
        <taxon>Mastadenovirus</taxon>
        <taxon>Canine mastadenovirus A</taxon>
    </lineage>
</organism>
<evidence type="ECO:0000250" key="1">
    <source>
        <dbReference type="UniProtKB" id="P03243"/>
    </source>
</evidence>
<evidence type="ECO:0000250" key="2">
    <source>
        <dbReference type="UniProtKB" id="P03244"/>
    </source>
</evidence>
<evidence type="ECO:0000256" key="3">
    <source>
        <dbReference type="SAM" id="MobiDB-lite"/>
    </source>
</evidence>
<evidence type="ECO:0000305" key="4"/>
<name>E1B55_ADECC</name>
<comment type="function">
    <text evidence="1">Plays a major role to prevent cellular inhibition of viral genome replication. Assembles an SCF-like E3 ubiquitin ligase complex based on the cellular proteins ELOB, ELOC, CUL5 and RBX1, in cooperation with viral E4orf6. This viral RING-type ligase ubiquitinates cellular substrates and targets them to proteasomal degradation: TP53/p53, LIG4, MRE11-RAD50-NBS1 (MRN) complex, ITGA3, DAXX and BLM. E1B-55K probably acts as the substrate-specific adapter of the SCF-like E3 ubiquitin ligase complex. Degradation of host TP53/p53 activity is essential for preventing E1A-induced TP53 accumulation that would otherwise lead to cell apoptosis and growth arrest. E1B-55K also inactivates TP53 transcription-factor activity by binding its transactivation domain. E1B-55K also functions as a SUMO1 E3 ligase for TP53 which causes the latter to be sequestered in promyelocytic leukemia (PML) nuclear bodies thereby contributing to maximal inhibition of TP53 function.</text>
</comment>
<comment type="subunit">
    <text evidence="1 2">Interacts with host PML-4 and PML-5; this interaction promotes efficient subnuclear targeting of E1B-55K to PML nuclear bodies. Interacts with E4-ORF3 protein (By similarity). Interacts with E4-ORF6 protein (By similarity).</text>
</comment>
<comment type="subcellular location">
    <subcellularLocation>
        <location evidence="1">Host nucleus</location>
    </subcellularLocation>
    <subcellularLocation>
        <location evidence="1">Host cytoplasm</location>
    </subcellularLocation>
    <text evidence="1">Colocalizes with host TP53 to host PML nuclear bodies. PML localization of E1B-55K is necessary for E1B-55K-dependent SUMOylation of TP53.</text>
</comment>
<comment type="domain">
    <text evidence="1">Contains a PML interaction motif that allows the subnuclear PML localization.</text>
</comment>
<comment type="similarity">
    <text evidence="4">Belongs to the adenoviridae E1B 55 kDa protein family.</text>
</comment>